<name>RL23_SYNSC</name>
<organism>
    <name type="scientific">Synechococcus sp. (strain CC9605)</name>
    <dbReference type="NCBI Taxonomy" id="110662"/>
    <lineage>
        <taxon>Bacteria</taxon>
        <taxon>Bacillati</taxon>
        <taxon>Cyanobacteriota</taxon>
        <taxon>Cyanophyceae</taxon>
        <taxon>Synechococcales</taxon>
        <taxon>Synechococcaceae</taxon>
        <taxon>Synechococcus</taxon>
    </lineage>
</organism>
<protein>
    <recommendedName>
        <fullName evidence="1">Large ribosomal subunit protein uL23</fullName>
    </recommendedName>
    <alternativeName>
        <fullName evidence="2">50S ribosomal protein L23</fullName>
    </alternativeName>
</protein>
<evidence type="ECO:0000255" key="1">
    <source>
        <dbReference type="HAMAP-Rule" id="MF_01369"/>
    </source>
</evidence>
<evidence type="ECO:0000305" key="2"/>
<accession>Q3AMN2</accession>
<sequence length="100" mass="11395">MTERFQGRLADVIRRPLITEKATRALEINQYTFEVDHRAAKPDIKAAIEQLFDVKVTGISTMNPPRRSRRMGRFAGKRAQVKKAVVRLAEGNSIQLFPES</sequence>
<feature type="chain" id="PRO_0000272857" description="Large ribosomal subunit protein uL23">
    <location>
        <begin position="1"/>
        <end position="100"/>
    </location>
</feature>
<proteinExistence type="inferred from homology"/>
<comment type="function">
    <text evidence="1">One of the early assembly proteins it binds 23S rRNA. One of the proteins that surrounds the polypeptide exit tunnel on the outside of the ribosome. Forms the main docking site for trigger factor binding to the ribosome.</text>
</comment>
<comment type="subunit">
    <text evidence="1">Part of the 50S ribosomal subunit. Contacts protein L29, and trigger factor when it is bound to the ribosome.</text>
</comment>
<comment type="similarity">
    <text evidence="1">Belongs to the universal ribosomal protein uL23 family.</text>
</comment>
<gene>
    <name evidence="1" type="primary">rplW</name>
    <name evidence="1" type="synonym">rpl23</name>
    <name type="ordered locus">Syncc9605_0374</name>
</gene>
<keyword id="KW-0687">Ribonucleoprotein</keyword>
<keyword id="KW-0689">Ribosomal protein</keyword>
<keyword id="KW-0694">RNA-binding</keyword>
<keyword id="KW-0699">rRNA-binding</keyword>
<reference key="1">
    <citation type="submission" date="2005-07" db="EMBL/GenBank/DDBJ databases">
        <title>Complete sequence of Synechococcus sp. CC9605.</title>
        <authorList>
            <consortium name="US DOE Joint Genome Institute"/>
            <person name="Copeland A."/>
            <person name="Lucas S."/>
            <person name="Lapidus A."/>
            <person name="Barry K."/>
            <person name="Detter J.C."/>
            <person name="Glavina T."/>
            <person name="Hammon N."/>
            <person name="Israni S."/>
            <person name="Pitluck S."/>
            <person name="Schmutz J."/>
            <person name="Martinez M."/>
            <person name="Larimer F."/>
            <person name="Land M."/>
            <person name="Kyrpides N."/>
            <person name="Ivanova N."/>
            <person name="Richardson P."/>
        </authorList>
    </citation>
    <scope>NUCLEOTIDE SEQUENCE [LARGE SCALE GENOMIC DNA]</scope>
    <source>
        <strain>CC9605</strain>
    </source>
</reference>
<dbReference type="EMBL" id="CP000110">
    <property type="protein sequence ID" value="ABB34150.1"/>
    <property type="molecule type" value="Genomic_DNA"/>
</dbReference>
<dbReference type="RefSeq" id="WP_006850625.1">
    <property type="nucleotide sequence ID" value="NC_007516.1"/>
</dbReference>
<dbReference type="SMR" id="Q3AMN2"/>
<dbReference type="STRING" id="110662.Syncc9605_0374"/>
<dbReference type="KEGG" id="syd:Syncc9605_0374"/>
<dbReference type="eggNOG" id="COG0089">
    <property type="taxonomic scope" value="Bacteria"/>
</dbReference>
<dbReference type="HOGENOM" id="CLU_037562_3_2_3"/>
<dbReference type="OrthoDB" id="9793353at2"/>
<dbReference type="GO" id="GO:1990904">
    <property type="term" value="C:ribonucleoprotein complex"/>
    <property type="evidence" value="ECO:0007669"/>
    <property type="project" value="UniProtKB-KW"/>
</dbReference>
<dbReference type="GO" id="GO:0005840">
    <property type="term" value="C:ribosome"/>
    <property type="evidence" value="ECO:0007669"/>
    <property type="project" value="UniProtKB-KW"/>
</dbReference>
<dbReference type="GO" id="GO:0019843">
    <property type="term" value="F:rRNA binding"/>
    <property type="evidence" value="ECO:0007669"/>
    <property type="project" value="UniProtKB-UniRule"/>
</dbReference>
<dbReference type="GO" id="GO:0003735">
    <property type="term" value="F:structural constituent of ribosome"/>
    <property type="evidence" value="ECO:0007669"/>
    <property type="project" value="InterPro"/>
</dbReference>
<dbReference type="GO" id="GO:0006412">
    <property type="term" value="P:translation"/>
    <property type="evidence" value="ECO:0007669"/>
    <property type="project" value="UniProtKB-UniRule"/>
</dbReference>
<dbReference type="FunFam" id="3.30.70.330:FF:000001">
    <property type="entry name" value="50S ribosomal protein L23"/>
    <property type="match status" value="1"/>
</dbReference>
<dbReference type="Gene3D" id="3.30.70.330">
    <property type="match status" value="1"/>
</dbReference>
<dbReference type="HAMAP" id="MF_01369_B">
    <property type="entry name" value="Ribosomal_uL23_B"/>
    <property type="match status" value="1"/>
</dbReference>
<dbReference type="InterPro" id="IPR012677">
    <property type="entry name" value="Nucleotide-bd_a/b_plait_sf"/>
</dbReference>
<dbReference type="InterPro" id="IPR013025">
    <property type="entry name" value="Ribosomal_uL23-like"/>
</dbReference>
<dbReference type="InterPro" id="IPR012678">
    <property type="entry name" value="Ribosomal_uL23/eL15/eS24_sf"/>
</dbReference>
<dbReference type="InterPro" id="IPR001014">
    <property type="entry name" value="Ribosomal_uL23_CS"/>
</dbReference>
<dbReference type="NCBIfam" id="NF004363">
    <property type="entry name" value="PRK05738.2-4"/>
    <property type="match status" value="1"/>
</dbReference>
<dbReference type="NCBIfam" id="NF004365">
    <property type="entry name" value="PRK05738.3-1"/>
    <property type="match status" value="1"/>
</dbReference>
<dbReference type="NCBIfam" id="NF004366">
    <property type="entry name" value="PRK05738.3-2"/>
    <property type="match status" value="1"/>
</dbReference>
<dbReference type="NCBIfam" id="NF004368">
    <property type="entry name" value="PRK05738.3-4"/>
    <property type="match status" value="1"/>
</dbReference>
<dbReference type="PANTHER" id="PTHR11620">
    <property type="entry name" value="60S RIBOSOMAL PROTEIN L23A"/>
    <property type="match status" value="1"/>
</dbReference>
<dbReference type="Pfam" id="PF00276">
    <property type="entry name" value="Ribosomal_L23"/>
    <property type="match status" value="1"/>
</dbReference>
<dbReference type="SUPFAM" id="SSF54189">
    <property type="entry name" value="Ribosomal proteins S24e, L23 and L15e"/>
    <property type="match status" value="1"/>
</dbReference>
<dbReference type="PROSITE" id="PS00050">
    <property type="entry name" value="RIBOSOMAL_L23"/>
    <property type="match status" value="1"/>
</dbReference>